<organism>
    <name type="scientific">Mus musculus</name>
    <name type="common">Mouse</name>
    <dbReference type="NCBI Taxonomy" id="10090"/>
    <lineage>
        <taxon>Eukaryota</taxon>
        <taxon>Metazoa</taxon>
        <taxon>Chordata</taxon>
        <taxon>Craniata</taxon>
        <taxon>Vertebrata</taxon>
        <taxon>Euteleostomi</taxon>
        <taxon>Mammalia</taxon>
        <taxon>Eutheria</taxon>
        <taxon>Euarchontoglires</taxon>
        <taxon>Glires</taxon>
        <taxon>Rodentia</taxon>
        <taxon>Myomorpha</taxon>
        <taxon>Muroidea</taxon>
        <taxon>Muridae</taxon>
        <taxon>Murinae</taxon>
        <taxon>Mus</taxon>
        <taxon>Mus</taxon>
    </lineage>
</organism>
<protein>
    <recommendedName>
        <fullName>Nuclear receptor subfamily 0 group B member 1</fullName>
    </recommendedName>
    <alternativeName>
        <fullName>Nuclear receptor DAX-1</fullName>
    </alternativeName>
</protein>
<gene>
    <name type="primary">Nr0b1</name>
    <name type="synonym">Ahch</name>
    <name type="synonym">Dax1</name>
</gene>
<proteinExistence type="evidence at protein level"/>
<keyword id="KW-0002">3D-structure</keyword>
<keyword id="KW-0963">Cytoplasm</keyword>
<keyword id="KW-0539">Nucleus</keyword>
<keyword id="KW-0675">Receptor</keyword>
<keyword id="KW-1185">Reference proteome</keyword>
<keyword id="KW-0677">Repeat</keyword>
<keyword id="KW-0678">Repressor</keyword>
<keyword id="KW-0804">Transcription</keyword>
<keyword id="KW-0805">Transcription regulation</keyword>
<name>NR0B1_MOUSE</name>
<feature type="chain" id="PRO_0000053749" description="Nuclear receptor subfamily 0 group B member 1">
    <location>
        <begin position="1"/>
        <end position="472"/>
    </location>
</feature>
<feature type="repeat" description="1">
    <location>
        <begin position="1"/>
        <end position="67"/>
    </location>
</feature>
<feature type="repeat" description="2">
    <location>
        <begin position="68"/>
        <end position="135"/>
    </location>
</feature>
<feature type="repeat" description="3">
    <location>
        <begin position="136"/>
        <end position="202"/>
    </location>
</feature>
<feature type="domain" description="NR LBD" evidence="2">
    <location>
        <begin position="190"/>
        <end position="471"/>
    </location>
</feature>
<feature type="repeat" description="4; truncated">
    <location>
        <begin position="203"/>
        <end position="255"/>
    </location>
</feature>
<feature type="region of interest" description="4 X 67 AA tandem repeats">
    <location>
        <begin position="1"/>
        <end position="255"/>
    </location>
</feature>
<feature type="region of interest" description="Disordered" evidence="3">
    <location>
        <begin position="214"/>
        <end position="238"/>
    </location>
</feature>
<feature type="region of interest" description="Disordered" evidence="3">
    <location>
        <begin position="324"/>
        <end position="343"/>
    </location>
</feature>
<feature type="short sequence motif" description="LXXLL motif 1">
    <location>
        <begin position="13"/>
        <end position="17"/>
    </location>
</feature>
<feature type="short sequence motif" description="LXXLL motif 2">
    <location>
        <begin position="80"/>
        <end position="84"/>
    </location>
</feature>
<feature type="short sequence motif" description="LXXLL motif 3">
    <location>
        <begin position="148"/>
        <end position="152"/>
    </location>
</feature>
<feature type="short sequence motif" description="AF-2 motif">
    <location>
        <begin position="463"/>
        <end position="468"/>
    </location>
</feature>
<feature type="compositionally biased region" description="Polar residues" evidence="3">
    <location>
        <begin position="214"/>
        <end position="231"/>
    </location>
</feature>
<feature type="helix" evidence="10">
    <location>
        <begin position="253"/>
        <end position="272"/>
    </location>
</feature>
<feature type="helix" evidence="10">
    <location>
        <begin position="275"/>
        <end position="278"/>
    </location>
</feature>
<feature type="helix" evidence="10">
    <location>
        <begin position="282"/>
        <end position="303"/>
    </location>
</feature>
<feature type="helix" evidence="10">
    <location>
        <begin position="359"/>
        <end position="372"/>
    </location>
</feature>
<feature type="helix" evidence="10">
    <location>
        <begin position="377"/>
        <end position="388"/>
    </location>
</feature>
<feature type="helix" evidence="10">
    <location>
        <begin position="399"/>
        <end position="420"/>
    </location>
</feature>
<feature type="helix" evidence="10">
    <location>
        <begin position="426"/>
        <end position="438"/>
    </location>
</feature>
<feature type="helix" evidence="10">
    <location>
        <begin position="445"/>
        <end position="450"/>
    </location>
</feature>
<feature type="helix" evidence="10">
    <location>
        <begin position="452"/>
        <end position="455"/>
    </location>
</feature>
<feature type="helix" evidence="10">
    <location>
        <begin position="460"/>
        <end position="467"/>
    </location>
</feature>
<evidence type="ECO:0000250" key="1">
    <source>
        <dbReference type="UniProtKB" id="P51843"/>
    </source>
</evidence>
<evidence type="ECO:0000255" key="2">
    <source>
        <dbReference type="PROSITE-ProRule" id="PRU01189"/>
    </source>
</evidence>
<evidence type="ECO:0000256" key="3">
    <source>
        <dbReference type="SAM" id="MobiDB-lite"/>
    </source>
</evidence>
<evidence type="ECO:0000269" key="4">
    <source>
    </source>
</evidence>
<evidence type="ECO:0000269" key="5">
    <source>
    </source>
</evidence>
<evidence type="ECO:0000269" key="6">
    <source>
    </source>
</evidence>
<evidence type="ECO:0000269" key="7">
    <source>
    </source>
</evidence>
<evidence type="ECO:0000305" key="8"/>
<evidence type="ECO:0007744" key="9">
    <source>
        <dbReference type="PDB" id="3F5C"/>
    </source>
</evidence>
<evidence type="ECO:0007829" key="10">
    <source>
        <dbReference type="PDB" id="3F5C"/>
    </source>
</evidence>
<dbReference type="EMBL" id="S83180">
    <property type="protein sequence ID" value="AAB46875.1"/>
    <property type="molecule type" value="Genomic_DNA"/>
</dbReference>
<dbReference type="EMBL" id="S83178">
    <property type="protein sequence ID" value="AAB46875.1"/>
    <property type="status" value="JOINED"/>
    <property type="molecule type" value="Genomic_DNA"/>
</dbReference>
<dbReference type="EMBL" id="U41568">
    <property type="protein sequence ID" value="AAC52920.1"/>
    <property type="molecule type" value="mRNA"/>
</dbReference>
<dbReference type="CCDS" id="CCDS30260.1"/>
<dbReference type="PIR" id="JC5199">
    <property type="entry name" value="JC5199"/>
</dbReference>
<dbReference type="RefSeq" id="NP_031456.1">
    <property type="nucleotide sequence ID" value="NM_007430.5"/>
</dbReference>
<dbReference type="PDB" id="3F5C">
    <property type="method" value="X-ray"/>
    <property type="resolution" value="3.00 A"/>
    <property type="chains" value="B/C=205-472"/>
</dbReference>
<dbReference type="PDBsum" id="3F5C"/>
<dbReference type="SMR" id="Q61066"/>
<dbReference type="BioGRID" id="198035">
    <property type="interactions" value="18"/>
</dbReference>
<dbReference type="DIP" id="DIP-29929N"/>
<dbReference type="FunCoup" id="Q61066">
    <property type="interactions" value="461"/>
</dbReference>
<dbReference type="IntAct" id="Q61066">
    <property type="interactions" value="12"/>
</dbReference>
<dbReference type="MINT" id="Q61066"/>
<dbReference type="STRING" id="10090.ENSMUSP00000026036"/>
<dbReference type="iPTMnet" id="Q61066"/>
<dbReference type="PhosphoSitePlus" id="Q61066"/>
<dbReference type="PaxDb" id="10090-ENSMUSP00000026036"/>
<dbReference type="ProteomicsDB" id="293716"/>
<dbReference type="Antibodypedia" id="10329">
    <property type="antibodies" value="632 antibodies from 43 providers"/>
</dbReference>
<dbReference type="DNASU" id="11614"/>
<dbReference type="Ensembl" id="ENSMUST00000026036.5">
    <property type="protein sequence ID" value="ENSMUSP00000026036.5"/>
    <property type="gene ID" value="ENSMUSG00000025056.5"/>
</dbReference>
<dbReference type="GeneID" id="11614"/>
<dbReference type="KEGG" id="mmu:11614"/>
<dbReference type="UCSC" id="uc009tsd.1">
    <property type="organism name" value="mouse"/>
</dbReference>
<dbReference type="AGR" id="MGI:1352460"/>
<dbReference type="CTD" id="190"/>
<dbReference type="MGI" id="MGI:1352460">
    <property type="gene designation" value="Nr0b1"/>
</dbReference>
<dbReference type="VEuPathDB" id="HostDB:ENSMUSG00000025056"/>
<dbReference type="eggNOG" id="KOG3575">
    <property type="taxonomic scope" value="Eukaryota"/>
</dbReference>
<dbReference type="GeneTree" id="ENSGT00390000015719"/>
<dbReference type="HOGENOM" id="CLU_674314_0_0_1"/>
<dbReference type="InParanoid" id="Q61066"/>
<dbReference type="OMA" id="ACWGCSC"/>
<dbReference type="OrthoDB" id="9926883at2759"/>
<dbReference type="PhylomeDB" id="Q61066"/>
<dbReference type="TreeFam" id="TF332386"/>
<dbReference type="Reactome" id="R-MMU-383280">
    <property type="pathway name" value="Nuclear Receptor transcription pathway"/>
</dbReference>
<dbReference type="BioGRID-ORCS" id="11614">
    <property type="hits" value="3 hits in 79 CRISPR screens"/>
</dbReference>
<dbReference type="EvolutionaryTrace" id="Q61066"/>
<dbReference type="PRO" id="PR:Q61066"/>
<dbReference type="Proteomes" id="UP000000589">
    <property type="component" value="Chromosome X"/>
</dbReference>
<dbReference type="RNAct" id="Q61066">
    <property type="molecule type" value="protein"/>
</dbReference>
<dbReference type="Bgee" id="ENSMUSG00000025056">
    <property type="expression patterns" value="Expressed in mesodermal cell in embryo and 38 other cell types or tissues"/>
</dbReference>
<dbReference type="ExpressionAtlas" id="Q61066">
    <property type="expression patterns" value="baseline and differential"/>
</dbReference>
<dbReference type="GO" id="GO:0034451">
    <property type="term" value="C:centriolar satellite"/>
    <property type="evidence" value="ECO:0007669"/>
    <property type="project" value="Ensembl"/>
</dbReference>
<dbReference type="GO" id="GO:0005737">
    <property type="term" value="C:cytoplasm"/>
    <property type="evidence" value="ECO:0000314"/>
    <property type="project" value="MGI"/>
</dbReference>
<dbReference type="GO" id="GO:0016020">
    <property type="term" value="C:membrane"/>
    <property type="evidence" value="ECO:0007669"/>
    <property type="project" value="Ensembl"/>
</dbReference>
<dbReference type="GO" id="GO:0016607">
    <property type="term" value="C:nuclear speck"/>
    <property type="evidence" value="ECO:0007669"/>
    <property type="project" value="Ensembl"/>
</dbReference>
<dbReference type="GO" id="GO:0005634">
    <property type="term" value="C:nucleus"/>
    <property type="evidence" value="ECO:0000314"/>
    <property type="project" value="HGNC-UCL"/>
</dbReference>
<dbReference type="GO" id="GO:0005840">
    <property type="term" value="C:ribosome"/>
    <property type="evidence" value="ECO:0000314"/>
    <property type="project" value="HGNC-UCL"/>
</dbReference>
<dbReference type="GO" id="GO:0032448">
    <property type="term" value="F:DNA hairpin binding"/>
    <property type="evidence" value="ECO:0007669"/>
    <property type="project" value="Ensembl"/>
</dbReference>
<dbReference type="GO" id="GO:0016922">
    <property type="term" value="F:nuclear receptor binding"/>
    <property type="evidence" value="ECO:0007669"/>
    <property type="project" value="Ensembl"/>
</dbReference>
<dbReference type="GO" id="GO:0019904">
    <property type="term" value="F:protein domain specific binding"/>
    <property type="evidence" value="ECO:0007669"/>
    <property type="project" value="Ensembl"/>
</dbReference>
<dbReference type="GO" id="GO:0042803">
    <property type="term" value="F:protein homodimerization activity"/>
    <property type="evidence" value="ECO:0007669"/>
    <property type="project" value="Ensembl"/>
</dbReference>
<dbReference type="GO" id="GO:0003723">
    <property type="term" value="F:RNA binding"/>
    <property type="evidence" value="ECO:0000314"/>
    <property type="project" value="HGNC-UCL"/>
</dbReference>
<dbReference type="GO" id="GO:0003714">
    <property type="term" value="F:transcription corepressor activity"/>
    <property type="evidence" value="ECO:0000314"/>
    <property type="project" value="UniProtKB"/>
</dbReference>
<dbReference type="GO" id="GO:0008134">
    <property type="term" value="F:transcription factor binding"/>
    <property type="evidence" value="ECO:0000353"/>
    <property type="project" value="UniProtKB"/>
</dbReference>
<dbReference type="GO" id="GO:0030325">
    <property type="term" value="P:adrenal gland development"/>
    <property type="evidence" value="ECO:0000316"/>
    <property type="project" value="MGI"/>
</dbReference>
<dbReference type="GO" id="GO:0035987">
    <property type="term" value="P:endodermal cell differentiation"/>
    <property type="evidence" value="ECO:0000315"/>
    <property type="project" value="MGI"/>
</dbReference>
<dbReference type="GO" id="GO:0033327">
    <property type="term" value="P:Leydig cell differentiation"/>
    <property type="evidence" value="ECO:0000315"/>
    <property type="project" value="MGI"/>
</dbReference>
<dbReference type="GO" id="GO:0008584">
    <property type="term" value="P:male gonad development"/>
    <property type="evidence" value="ECO:0000315"/>
    <property type="project" value="MGI"/>
</dbReference>
<dbReference type="GO" id="GO:0030238">
    <property type="term" value="P:male sex determination"/>
    <property type="evidence" value="ECO:0000315"/>
    <property type="project" value="MGI"/>
</dbReference>
<dbReference type="GO" id="GO:0045892">
    <property type="term" value="P:negative regulation of DNA-templated transcription"/>
    <property type="evidence" value="ECO:0000314"/>
    <property type="project" value="UniProtKB"/>
</dbReference>
<dbReference type="GO" id="GO:0033144">
    <property type="term" value="P:negative regulation of intracellular steroid hormone receptor signaling pathway"/>
    <property type="evidence" value="ECO:0007669"/>
    <property type="project" value="Ensembl"/>
</dbReference>
<dbReference type="GO" id="GO:0010894">
    <property type="term" value="P:negative regulation of steroid biosynthetic process"/>
    <property type="evidence" value="ECO:0007669"/>
    <property type="project" value="Ensembl"/>
</dbReference>
<dbReference type="GO" id="GO:0000122">
    <property type="term" value="P:negative regulation of transcription by RNA polymerase II"/>
    <property type="evidence" value="ECO:0000315"/>
    <property type="project" value="MGI"/>
</dbReference>
<dbReference type="GO" id="GO:0008104">
    <property type="term" value="P:protein localization"/>
    <property type="evidence" value="ECO:0007669"/>
    <property type="project" value="Ensembl"/>
</dbReference>
<dbReference type="GO" id="GO:0035902">
    <property type="term" value="P:response to immobilization stress"/>
    <property type="evidence" value="ECO:0000315"/>
    <property type="project" value="MGI"/>
</dbReference>
<dbReference type="GO" id="GO:0060008">
    <property type="term" value="P:Sertoli cell differentiation"/>
    <property type="evidence" value="ECO:0000315"/>
    <property type="project" value="MGI"/>
</dbReference>
<dbReference type="GO" id="GO:0007530">
    <property type="term" value="P:sex determination"/>
    <property type="evidence" value="ECO:0000316"/>
    <property type="project" value="MGI"/>
</dbReference>
<dbReference type="GO" id="GO:0007283">
    <property type="term" value="P:spermatogenesis"/>
    <property type="evidence" value="ECO:0000315"/>
    <property type="project" value="MGI"/>
</dbReference>
<dbReference type="CDD" id="cd07350">
    <property type="entry name" value="NR_LBD_Dax1"/>
    <property type="match status" value="1"/>
</dbReference>
<dbReference type="FunFam" id="1.10.565.10:FF:000027">
    <property type="entry name" value="nuclear receptor subfamily 0 group B member 1"/>
    <property type="match status" value="1"/>
</dbReference>
<dbReference type="Gene3D" id="1.10.565.10">
    <property type="entry name" value="Retinoid X Receptor"/>
    <property type="match status" value="1"/>
</dbReference>
<dbReference type="IDEAL" id="IID50228"/>
<dbReference type="InterPro" id="IPR035500">
    <property type="entry name" value="NHR-like_dom_sf"/>
</dbReference>
<dbReference type="InterPro" id="IPR033544">
    <property type="entry name" value="NR0B1/2"/>
</dbReference>
<dbReference type="InterPro" id="IPR000536">
    <property type="entry name" value="Nucl_hrmn_rcpt_lig-bd"/>
</dbReference>
<dbReference type="InterPro" id="IPR001723">
    <property type="entry name" value="Nuclear_hrmn_rcpt"/>
</dbReference>
<dbReference type="InterPro" id="IPR025900">
    <property type="entry name" value="Nuclear_receptor_repeat"/>
</dbReference>
<dbReference type="PANTHER" id="PTHR24081">
    <property type="entry name" value="NUCLEAR RECEPTOR SUBFAMILY 0 GROUP B"/>
    <property type="match status" value="1"/>
</dbReference>
<dbReference type="PANTHER" id="PTHR24081:SF1">
    <property type="entry name" value="NUCLEAR RECEPTOR SUBFAMILY 0 GROUP B MEMBER 1"/>
    <property type="match status" value="1"/>
</dbReference>
<dbReference type="Pfam" id="PF00104">
    <property type="entry name" value="Hormone_recep"/>
    <property type="match status" value="1"/>
</dbReference>
<dbReference type="Pfam" id="PF14046">
    <property type="entry name" value="NR_Repeat"/>
    <property type="match status" value="4"/>
</dbReference>
<dbReference type="PRINTS" id="PR00398">
    <property type="entry name" value="STRDHORMONER"/>
</dbReference>
<dbReference type="SMART" id="SM00430">
    <property type="entry name" value="HOLI"/>
    <property type="match status" value="1"/>
</dbReference>
<dbReference type="SUPFAM" id="SSF48508">
    <property type="entry name" value="Nuclear receptor ligand-binding domain"/>
    <property type="match status" value="1"/>
</dbReference>
<dbReference type="PROSITE" id="PS51843">
    <property type="entry name" value="NR_LBD"/>
    <property type="match status" value="1"/>
</dbReference>
<accession>Q61066</accession>
<accession>O09068</accession>
<accession>O09147</accession>
<reference key="1">
    <citation type="journal article" date="1996" name="Gene">
        <title>Ahch, the mouse homologue of DAX1: cloning, characterization and synteny with GyK, the glycerol kinase locus.</title>
        <authorList>
            <person name="Guo W."/>
            <person name="Lovell R.S."/>
            <person name="Zhang Y.H."/>
            <person name="Huang B.L."/>
            <person name="Burris T.P."/>
            <person name="Craigen W.J."/>
            <person name="McCabe E.R.B."/>
        </authorList>
    </citation>
    <scope>NUCLEOTIDE SEQUENCE [MRNA]</scope>
    <source>
        <strain>CD-1</strain>
        <tissue>Testis</tissue>
    </source>
</reference>
<reference key="2">
    <citation type="journal article" date="1996" name="Endocrinology">
        <title>Characterization of the mouse DAX-1 gene reveals evolutionary conservation of a unique amino-terminal motif and widespread expression in mouse tissue.</title>
        <authorList>
            <person name="Bae D.S."/>
            <person name="Schaefer M.L."/>
            <person name="Partan B.W."/>
            <person name="Muglia L."/>
        </authorList>
    </citation>
    <scope>NUCLEOTIDE SEQUENCE [GENOMIC DNA]</scope>
    <scope>TISSUE SPECIFICITY</scope>
</reference>
<reference key="3">
    <citation type="journal article" date="2006" name="Mol. Genet. Metab.">
        <title>Novel role for the orphan nuclear receptor Dax1 in embryogenesis, different from steroidogenesis.</title>
        <authorList>
            <person name="Niakan K.K."/>
            <person name="Davis E.C."/>
            <person name="Clipsham R.C."/>
            <person name="Jiang M."/>
            <person name="Dehart D.B."/>
            <person name="Sulik K.K."/>
            <person name="McCabe E.R.B."/>
        </authorList>
    </citation>
    <scope>DEVELOPMENTAL STAGE</scope>
    <scope>FUNCTION</scope>
</reference>
<reference key="4">
    <citation type="journal article" date="2016" name="Biochem. Biophys. Res. Commun.">
        <title>Esrrb directly binds to Gata6 promoter and regulates its expression with Dax1 and Ncoa3.</title>
        <authorList>
            <person name="Uranishi K."/>
            <person name="Akagi T."/>
            <person name="Koide H."/>
            <person name="Yokota T."/>
        </authorList>
    </citation>
    <scope>INTERACTION WITH ESRRB</scope>
</reference>
<reference evidence="9" key="5">
    <citation type="journal article" date="2008" name="Proc. Natl. Acad. Sci. U.S.A.">
        <title>The structure of corepressor Dax-1 bound to its target nuclear receptor LRH-1.</title>
        <authorList>
            <person name="Sablin E.P."/>
            <person name="Woods A."/>
            <person name="Krylova I.N."/>
            <person name="Hwang P."/>
            <person name="Ingraham H.A."/>
            <person name="Fletterick R.J."/>
        </authorList>
    </citation>
    <scope>X-RAY CRYSTALLOGRAPHY (3.00 ANGSTROMS) OF 205-472 IN COMPLEX WITH NR5A2</scope>
    <scope>FUNCTION</scope>
    <scope>INTERACTION WITH NR5A2</scope>
</reference>
<sequence length="472" mass="52576">MAGEDHPWQGSILYNLLMSAKQKHASQEEREVRLGAQCWGCACGAQPVLGGERLSGGQARSLLYRCCFCGENHPRQGGILYSMLTNARQPSVATQAPRARFGAPCWGCACGSAEPLVGREGLPAGQAPSLLYRCCFCGEEHPRQGSILYSLLTSAQQTHVSREAPEAHRRGEWWQLSYCTQSVGGPEGLQSTQAMAFLYRSYVCGEEQPQQISVASGTPVSADQTPATPQEQPRAPWWDASPGVQRLITLKDPQVVCEAASAGLLKTLRFVKYLPCFQILPLDQQLVLVRSCWAPLLMLELAQDHLHFEMMEIPETNTTQEMLTTRRQETEGPEPAEPQATEQPQMVSAEAGHLLPAAAVQAIKSFFFKCWSLNIDTKEYAYLKGTVLFNPDLPGLQCVKYIEGLQWRTQQILTEHIRMMQREYQIRSAELNSALFLLRFINSDVVTELFFRPIIGAVSMDDMMLEMLCAKL</sequence>
<comment type="function">
    <text evidence="1 4 5">Nuclear receptor that lacks a DNA-binding domain and acts as a corepressor that inhibits the transcriptional activity of other nuclear receptors through heterodimeric interactions (PubMed:19015525). Component of a cascade required for the development of the hypothalamic-pituitary-adrenal-gonadal axis (By similarity). May also have a role in the development of the embryo and in the maintenance of embryonic stem cell pluripotency (PubMed:16466956).</text>
</comment>
<comment type="subunit">
    <text evidence="1 5 6">Homodimer (By similarity). Interacts with NR5A1, NR5A2, NR0B2 and with COPS2 (PubMed:19015525). Interacts with ESRRB; represses ESRRB activity at the GATA6 promoter (PubMed:27601327).</text>
</comment>
<comment type="interaction">
    <interactant intactId="EBI-2312665">
        <id>Q61066</id>
    </interactant>
    <interactant intactId="EBI-2312731">
        <id>Q61539</id>
        <label>Esrrb</label>
    </interactant>
    <organismsDiffer>false</organismsDiffer>
    <experiments>3</experiments>
</comment>
<comment type="interaction">
    <interactant intactId="EBI-2312665">
        <id>Q61066</id>
    </interactant>
    <interactant intactId="EBI-2312517">
        <id>Q80Z64</id>
        <label>Nanog</label>
    </interactant>
    <organismsDiffer>false</organismsDiffer>
    <experiments>7</experiments>
</comment>
<comment type="interaction">
    <interactant intactId="EBI-2312665">
        <id>Q61066</id>
    </interactant>
    <interactant intactId="EBI-1606219">
        <id>P20263</id>
        <label>Pou5f1</label>
    </interactant>
    <organismsDiffer>false</organismsDiffer>
    <experiments>5</experiments>
</comment>
<comment type="interaction">
    <interactant intactId="EBI-2312665">
        <id>Q61066</id>
    </interactant>
    <interactant intactId="EBI-2312621">
        <id>Q6PR54</id>
        <label>Rif1</label>
    </interactant>
    <organismsDiffer>false</organismsDiffer>
    <experiments>2</experiments>
</comment>
<comment type="interaction">
    <interactant intactId="EBI-2312665">
        <id>Q61066</id>
    </interactant>
    <interactant intactId="EBI-2312694">
        <id>P70414</id>
        <label>Slc8a1</label>
    </interactant>
    <organismsDiffer>false</organismsDiffer>
    <experiments>2</experiments>
</comment>
<comment type="subcellular location">
    <subcellularLocation>
        <location evidence="1">Nucleus</location>
    </subcellularLocation>
    <subcellularLocation>
        <location evidence="1">Cytoplasm</location>
    </subcellularLocation>
    <text evidence="1">Shuttles between the cytoplasm and nucleus. Homodimers exits in the cytoplasm and in the nucleus.</text>
</comment>
<comment type="tissue specificity">
    <text evidence="7">Expressed in adult cerebral cortex, spinal cord, thymus, heart, lung, ovary, testis, adrenal gland, hypothalamus, spleen and kidney.</text>
</comment>
<comment type="developmental stage">
    <text evidence="4">Expressed at 5.5 dpc throughout the embryo except in the proximal visceral endoderm.</text>
</comment>
<comment type="domain">
    <text evidence="1">Homodimerization involved an interaction between amino and carboxy termini involving LXXLL motifs and steroid binding domain (AF-2 motif). Heterodimerizes with NR5A1 and NROB2 through its N-terminal LXXLL motifs.</text>
</comment>
<comment type="similarity">
    <text evidence="8">Belongs to the nuclear hormone receptor family. NR0 subfamily.</text>
</comment>